<name>NQO1_PARDE</name>
<gene>
    <name type="primary">nqo1</name>
</gene>
<accession>P29913</accession>
<dbReference type="EC" id="7.1.1.-"/>
<dbReference type="EMBL" id="M64432">
    <property type="protein sequence ID" value="AAA25585.1"/>
    <property type="molecule type" value="Genomic_DNA"/>
</dbReference>
<dbReference type="PIR" id="A39588">
    <property type="entry name" value="A39588"/>
</dbReference>
<dbReference type="SMR" id="P29913"/>
<dbReference type="TCDB" id="3.D.1.2.1">
    <property type="family name" value="the h+ or na+-translocating nadh dehydrogenase (ndh) family"/>
</dbReference>
<dbReference type="GO" id="GO:0005886">
    <property type="term" value="C:plasma membrane"/>
    <property type="evidence" value="ECO:0007669"/>
    <property type="project" value="UniProtKB-SubCell"/>
</dbReference>
<dbReference type="GO" id="GO:0051539">
    <property type="term" value="F:4 iron, 4 sulfur cluster binding"/>
    <property type="evidence" value="ECO:0007669"/>
    <property type="project" value="UniProtKB-KW"/>
</dbReference>
<dbReference type="GO" id="GO:0010181">
    <property type="term" value="F:FMN binding"/>
    <property type="evidence" value="ECO:0007669"/>
    <property type="project" value="InterPro"/>
</dbReference>
<dbReference type="GO" id="GO:0046872">
    <property type="term" value="F:metal ion binding"/>
    <property type="evidence" value="ECO:0007669"/>
    <property type="project" value="UniProtKB-KW"/>
</dbReference>
<dbReference type="GO" id="GO:0051287">
    <property type="term" value="F:NAD binding"/>
    <property type="evidence" value="ECO:0007669"/>
    <property type="project" value="InterPro"/>
</dbReference>
<dbReference type="GO" id="GO:0008137">
    <property type="term" value="F:NADH dehydrogenase (ubiquinone) activity"/>
    <property type="evidence" value="ECO:0007669"/>
    <property type="project" value="InterPro"/>
</dbReference>
<dbReference type="GO" id="GO:0048038">
    <property type="term" value="F:quinone binding"/>
    <property type="evidence" value="ECO:0007669"/>
    <property type="project" value="UniProtKB-KW"/>
</dbReference>
<dbReference type="FunFam" id="1.20.1440.230:FF:000001">
    <property type="entry name" value="Mitochondrial NADH dehydrogenase flavoprotein 1"/>
    <property type="match status" value="1"/>
</dbReference>
<dbReference type="FunFam" id="3.10.20.600:FF:000001">
    <property type="entry name" value="NADH dehydrogenase [ubiquinone] flavoprotein 1, mitochondrial"/>
    <property type="match status" value="1"/>
</dbReference>
<dbReference type="FunFam" id="3.40.50.11540:FF:000001">
    <property type="entry name" value="NADH dehydrogenase [ubiquinone] flavoprotein 1, mitochondrial"/>
    <property type="match status" value="1"/>
</dbReference>
<dbReference type="Gene3D" id="3.10.20.600">
    <property type="match status" value="1"/>
</dbReference>
<dbReference type="Gene3D" id="3.40.50.11540">
    <property type="entry name" value="NADH-ubiquinone oxidoreductase 51kDa subunit"/>
    <property type="match status" value="1"/>
</dbReference>
<dbReference type="Gene3D" id="1.20.1440.230">
    <property type="entry name" value="NADH-ubiquinone oxidoreductase 51kDa subunit, iron-sulphur binding domain"/>
    <property type="match status" value="1"/>
</dbReference>
<dbReference type="InterPro" id="IPR050837">
    <property type="entry name" value="ComplexI_51kDa_subunit"/>
</dbReference>
<dbReference type="InterPro" id="IPR001949">
    <property type="entry name" value="NADH-UbQ_OxRdtase_51kDa_CS"/>
</dbReference>
<dbReference type="InterPro" id="IPR011537">
    <property type="entry name" value="NADH-UbQ_OxRdtase_suF"/>
</dbReference>
<dbReference type="InterPro" id="IPR011538">
    <property type="entry name" value="Nuo51_FMN-bd"/>
</dbReference>
<dbReference type="InterPro" id="IPR037225">
    <property type="entry name" value="Nuo51_FMN-bd_sf"/>
</dbReference>
<dbReference type="InterPro" id="IPR019575">
    <property type="entry name" value="Nuop51_4Fe4S-bd"/>
</dbReference>
<dbReference type="InterPro" id="IPR037207">
    <property type="entry name" value="Nuop51_4Fe4S-bd_sf"/>
</dbReference>
<dbReference type="InterPro" id="IPR054765">
    <property type="entry name" value="SLBB_dom"/>
</dbReference>
<dbReference type="NCBIfam" id="TIGR01959">
    <property type="entry name" value="nuoF_fam"/>
    <property type="match status" value="1"/>
</dbReference>
<dbReference type="NCBIfam" id="NF010120">
    <property type="entry name" value="PRK13596.1"/>
    <property type="match status" value="1"/>
</dbReference>
<dbReference type="PANTHER" id="PTHR11780:SF10">
    <property type="entry name" value="NADH DEHYDROGENASE [UBIQUINONE] FLAVOPROTEIN 1, MITOCHONDRIAL"/>
    <property type="match status" value="1"/>
</dbReference>
<dbReference type="PANTHER" id="PTHR11780">
    <property type="entry name" value="NADH-UBIQUINONE OXIDOREDUCTASE FLAVOPROTEIN 1 NDUFV1"/>
    <property type="match status" value="1"/>
</dbReference>
<dbReference type="Pfam" id="PF01512">
    <property type="entry name" value="Complex1_51K"/>
    <property type="match status" value="1"/>
</dbReference>
<dbReference type="Pfam" id="PF10589">
    <property type="entry name" value="NADH_4Fe-4S"/>
    <property type="match status" value="1"/>
</dbReference>
<dbReference type="Pfam" id="PF22461">
    <property type="entry name" value="SLBB_2"/>
    <property type="match status" value="1"/>
</dbReference>
<dbReference type="SMART" id="SM00928">
    <property type="entry name" value="NADH_4Fe-4S"/>
    <property type="match status" value="1"/>
</dbReference>
<dbReference type="SUPFAM" id="SSF142019">
    <property type="entry name" value="Nqo1 FMN-binding domain-like"/>
    <property type="match status" value="1"/>
</dbReference>
<dbReference type="SUPFAM" id="SSF142984">
    <property type="entry name" value="Nqo1 middle domain-like"/>
    <property type="match status" value="1"/>
</dbReference>
<dbReference type="SUPFAM" id="SSF140490">
    <property type="entry name" value="Nqo1C-terminal domain-like"/>
    <property type="match status" value="1"/>
</dbReference>
<dbReference type="PROSITE" id="PS00644">
    <property type="entry name" value="COMPLEX1_51K_1"/>
    <property type="match status" value="1"/>
</dbReference>
<dbReference type="PROSITE" id="PS00645">
    <property type="entry name" value="COMPLEX1_51K_2"/>
    <property type="match status" value="1"/>
</dbReference>
<evidence type="ECO:0000250" key="1"/>
<evidence type="ECO:0000255" key="2"/>
<evidence type="ECO:0000305" key="3"/>
<feature type="chain" id="PRO_0000118566" description="NADH-quinone oxidoreductase chain 1">
    <location>
        <begin position="1"/>
        <end position="431"/>
    </location>
</feature>
<feature type="binding site" evidence="1">
    <location>
        <begin position="54"/>
        <end position="63"/>
    </location>
    <ligand>
        <name>NAD(+)</name>
        <dbReference type="ChEBI" id="CHEBI:57540"/>
    </ligand>
</feature>
<feature type="binding site" evidence="1">
    <location>
        <begin position="167"/>
        <end position="214"/>
    </location>
    <ligand>
        <name>FMN</name>
        <dbReference type="ChEBI" id="CHEBI:58210"/>
    </ligand>
</feature>
<feature type="binding site" evidence="2">
    <location>
        <position position="346"/>
    </location>
    <ligand>
        <name>[4Fe-4S] cluster</name>
        <dbReference type="ChEBI" id="CHEBI:49883"/>
    </ligand>
</feature>
<feature type="binding site" evidence="2">
    <location>
        <position position="349"/>
    </location>
    <ligand>
        <name>[4Fe-4S] cluster</name>
        <dbReference type="ChEBI" id="CHEBI:49883"/>
    </ligand>
</feature>
<feature type="binding site" evidence="2">
    <location>
        <position position="352"/>
    </location>
    <ligand>
        <name>[4Fe-4S] cluster</name>
        <dbReference type="ChEBI" id="CHEBI:49883"/>
    </ligand>
</feature>
<feature type="binding site" evidence="2">
    <location>
        <position position="392"/>
    </location>
    <ligand>
        <name>[4Fe-4S] cluster</name>
        <dbReference type="ChEBI" id="CHEBI:49883"/>
    </ligand>
</feature>
<organism>
    <name type="scientific">Paracoccus denitrificans</name>
    <dbReference type="NCBI Taxonomy" id="266"/>
    <lineage>
        <taxon>Bacteria</taxon>
        <taxon>Pseudomonadati</taxon>
        <taxon>Pseudomonadota</taxon>
        <taxon>Alphaproteobacteria</taxon>
        <taxon>Rhodobacterales</taxon>
        <taxon>Paracoccaceae</taxon>
        <taxon>Paracoccus</taxon>
    </lineage>
</organism>
<keyword id="KW-0004">4Fe-4S</keyword>
<keyword id="KW-0997">Cell inner membrane</keyword>
<keyword id="KW-1003">Cell membrane</keyword>
<keyword id="KW-0903">Direct protein sequencing</keyword>
<keyword id="KW-0285">Flavoprotein</keyword>
<keyword id="KW-0288">FMN</keyword>
<keyword id="KW-0408">Iron</keyword>
<keyword id="KW-0411">Iron-sulfur</keyword>
<keyword id="KW-0472">Membrane</keyword>
<keyword id="KW-0479">Metal-binding</keyword>
<keyword id="KW-0520">NAD</keyword>
<keyword id="KW-0874">Quinone</keyword>
<keyword id="KW-1278">Translocase</keyword>
<keyword id="KW-0830">Ubiquinone</keyword>
<sequence length="431" mass="47191">MLNDQDRIFTNLYGMGDRSLAGAKKRGHWDGTAAIIQRGRDKIIDEMKASGLRGRGGAGFPTGMKWSFMPKESDGRPSYLVINADESEPATCKDREIMRHDPHTLIEGALIASFAMGAHAAYIYIRGEFIREREALQAAIDECYDAGLLGRNAAGSGWDFDLYLHHGAGAYICGEETALLESLEGKKGMPRMKPPFPAGAGLYGCPTTVNNVESIAVVPTILRRGAEWFASFGRPNNAGVKLFGLTGHVNTPCVVEEAMSIPMRELIEKHGGGIRGGWKNLKAVIPGGASCPVLTAEQCENAIMDYDGMRDVRSSFGTACMIVMDQSTDVVKAIWRLSKFFKHESCGQCTPCREGTGWMMRVMERLVRGDAEVEEIDMLFDVTKQVEGHTICALGDAAAWPIQGLIRNFREEIEDRIKAKRTGRMGAMAAE</sequence>
<reference key="1">
    <citation type="journal article" date="1991" name="Biochemistry">
        <title>The NADH-binding subunit of the energy-transducing NADH-ubiquinone oxidoreductase of Paracoccus denitrificans: gene cloning and deduced primary structure.</title>
        <authorList>
            <person name="Xu X."/>
            <person name="Matsuno-Yagi A."/>
            <person name="Yagi T."/>
        </authorList>
    </citation>
    <scope>NUCLEOTIDE SEQUENCE [GENOMIC DNA]</scope>
    <scope>PROTEIN SEQUENCE OF 1-37</scope>
    <source>
        <strain>ATCC 13543 / NRRL B-3784 / NRC 449</strain>
    </source>
</reference>
<reference key="2">
    <citation type="journal article" date="1991" name="Biochemistry">
        <title>Characterization of the 25-kilodalton subunit of the energy-transducing NADH-ubiquinone oxidoreductase of Paracoccus denitrificans: sequence similarity to the 24-kilodalton subunit of the flavoprotein fraction of mammalian complex I.</title>
        <authorList>
            <person name="Xu X."/>
            <person name="Matsuno-Yagi A."/>
            <person name="Yagi T."/>
        </authorList>
    </citation>
    <scope>NUCLEOTIDE SEQUENCE [GENOMIC DNA] OF 1-8</scope>
    <scope>PROTEIN SEQUENCE OF 1-37 AND 194-203</scope>
    <source>
        <strain>ATCC 13543 / NRRL B-3784 / NRC 449</strain>
    </source>
</reference>
<reference key="3">
    <citation type="journal article" date="1992" name="Arch. Biochem. Biophys.">
        <title>Structural features of the 66-kDa subunit of the energy-transducing NADH-ubiquinone oxidoreductase (NDH-1) of Paracoccus denitrificans.</title>
        <authorList>
            <person name="Xu X."/>
            <person name="Matsuno-Yagi A."/>
            <person name="Yagi T."/>
        </authorList>
    </citation>
    <scope>NUCLEOTIDE SEQUENCE [GENOMIC DNA] OF 416-431</scope>
</reference>
<proteinExistence type="evidence at protein level"/>
<protein>
    <recommendedName>
        <fullName>NADH-quinone oxidoreductase chain 1</fullName>
        <ecNumber>7.1.1.-</ecNumber>
    </recommendedName>
    <alternativeName>
        <fullName>NADH dehydrogenase I, chain 1</fullName>
    </alternativeName>
    <alternativeName>
        <fullName>NDH-1, chain 1</fullName>
    </alternativeName>
</protein>
<comment type="function">
    <text>NDH-1 shuttles electrons from NADH, via FMN and iron-sulfur (Fe-S) centers, to quinones in the respiratory chain. The immediate electron acceptor for the enzyme in this species is believed to be ubiquinone. Couples the redox reaction to proton translocation (for every two electrons transferred, four hydrogen ions are translocated across the cytoplasmic membrane), and thus conserves the redox energy in a proton gradient.</text>
</comment>
<comment type="catalytic activity">
    <reaction>
        <text>a quinone + NADH + 5 H(+)(in) = a quinol + NAD(+) + 4 H(+)(out)</text>
        <dbReference type="Rhea" id="RHEA:57888"/>
        <dbReference type="ChEBI" id="CHEBI:15378"/>
        <dbReference type="ChEBI" id="CHEBI:24646"/>
        <dbReference type="ChEBI" id="CHEBI:57540"/>
        <dbReference type="ChEBI" id="CHEBI:57945"/>
        <dbReference type="ChEBI" id="CHEBI:132124"/>
    </reaction>
</comment>
<comment type="cofactor">
    <cofactor evidence="3">
        <name>FMN</name>
        <dbReference type="ChEBI" id="CHEBI:58210"/>
    </cofactor>
    <text evidence="3">Binds 1 FMN.</text>
</comment>
<comment type="cofactor">
    <cofactor evidence="3">
        <name>[4Fe-4S] cluster</name>
        <dbReference type="ChEBI" id="CHEBI:49883"/>
    </cofactor>
    <text evidence="3">Binds 1 [4Fe-4S] cluster.</text>
</comment>
<comment type="subunit">
    <text>NDH-1 is composed of at least 14 different subunits, Nqo1 to Nqo14. The complex has a L-shaped structure, with the hydrophobic arm (subunits Nqo7, Nqo8, Nqo10 to Nqo14) embedded in the inner membrane and the hydrophilic peripheral arm (subunits Nqo1 to Nqo6, Nqo9) protruding into the bacterial cytoplasm. The hydrophilic domain contains all the redox centers.</text>
</comment>
<comment type="subcellular location">
    <subcellularLocation>
        <location>Cell inner membrane</location>
        <topology>Peripheral membrane protein</topology>
    </subcellularLocation>
</comment>
<comment type="similarity">
    <text evidence="3">Belongs to the complex I 51 kDa subunit family.</text>
</comment>